<organism>
    <name type="scientific">Pongo pygmaeus</name>
    <name type="common">Bornean orangutan</name>
    <dbReference type="NCBI Taxonomy" id="9600"/>
    <lineage>
        <taxon>Eukaryota</taxon>
        <taxon>Metazoa</taxon>
        <taxon>Chordata</taxon>
        <taxon>Craniata</taxon>
        <taxon>Vertebrata</taxon>
        <taxon>Euteleostomi</taxon>
        <taxon>Mammalia</taxon>
        <taxon>Eutheria</taxon>
        <taxon>Euarchontoglires</taxon>
        <taxon>Primates</taxon>
        <taxon>Haplorrhini</taxon>
        <taxon>Catarrhini</taxon>
        <taxon>Hominidae</taxon>
        <taxon>Pongo</taxon>
    </lineage>
</organism>
<name>DB118_PONPY</name>
<comment type="function">
    <text evidence="2">Host defense peptide that exhibits antimicrobial activity against both Gram-negative bacteria, such as E.coli and S.typhimurium, and Gram-positive bacteria, such as S.aureus and B.subtilis (By similarity). Inhibits cell adhesion of E.coli on intestinal epithelial enterocytes (By similarity). Causes rapid permeabilization of both the outer and inner membrane of E.coli, leading to morphological alterations on the bacterial surface (By similarity). Binds to bacterial lipopolysaccharides (LPS) with high affinity, and may thereby be involved in immunoregulation through LPS neutralization (By similarity). May contribute to epididymal innate immunity and protect the sperm against attack by microorganisms (By similarity).</text>
</comment>
<comment type="subcellular location">
    <subcellularLocation>
        <location evidence="2">Secreted</location>
    </subcellularLocation>
</comment>
<comment type="PTM">
    <text evidence="2">The three-dimensional structure formed by the three intramolecular disulfide bridges is indispensable for antimicrobial activity.</text>
</comment>
<comment type="similarity">
    <text evidence="5">Belongs to the beta-defensin family.</text>
</comment>
<dbReference type="EMBL" id="AM410126">
    <property type="protein sequence ID" value="CAL68941.1"/>
    <property type="molecule type" value="Genomic_DNA"/>
</dbReference>
<dbReference type="RefSeq" id="XP_054322841.1">
    <property type="nucleotide sequence ID" value="XM_054466866.1"/>
</dbReference>
<dbReference type="SMR" id="A4H221"/>
<dbReference type="GeneID" id="129021463"/>
<dbReference type="GO" id="GO:0005576">
    <property type="term" value="C:extracellular region"/>
    <property type="evidence" value="ECO:0007669"/>
    <property type="project" value="UniProtKB-SubCell"/>
</dbReference>
<dbReference type="GO" id="GO:0001530">
    <property type="term" value="F:lipopolysaccharide binding"/>
    <property type="evidence" value="ECO:0000250"/>
    <property type="project" value="UniProtKB"/>
</dbReference>
<dbReference type="GO" id="GO:0050829">
    <property type="term" value="P:defense response to Gram-negative bacterium"/>
    <property type="evidence" value="ECO:0000250"/>
    <property type="project" value="UniProtKB"/>
</dbReference>
<dbReference type="GO" id="GO:0050830">
    <property type="term" value="P:defense response to Gram-positive bacterium"/>
    <property type="evidence" value="ECO:0000250"/>
    <property type="project" value="UniProtKB"/>
</dbReference>
<dbReference type="GO" id="GO:0045087">
    <property type="term" value="P:innate immune response"/>
    <property type="evidence" value="ECO:0000250"/>
    <property type="project" value="UniProtKB"/>
</dbReference>
<dbReference type="GO" id="GO:0031640">
    <property type="term" value="P:killing of cells of another organism"/>
    <property type="evidence" value="ECO:0000250"/>
    <property type="project" value="UniProtKB"/>
</dbReference>
<dbReference type="GO" id="GO:0007162">
    <property type="term" value="P:negative regulation of cell adhesion"/>
    <property type="evidence" value="ECO:0000250"/>
    <property type="project" value="UniProtKB"/>
</dbReference>
<dbReference type="GO" id="GO:0031665">
    <property type="term" value="P:negative regulation of lipopolysaccharide-mediated signaling pathway"/>
    <property type="evidence" value="ECO:0000250"/>
    <property type="project" value="UniProtKB"/>
</dbReference>
<dbReference type="InterPro" id="IPR050544">
    <property type="entry name" value="Beta-defensin"/>
</dbReference>
<dbReference type="InterPro" id="IPR025933">
    <property type="entry name" value="Beta_defensin_dom"/>
</dbReference>
<dbReference type="PANTHER" id="PTHR15001">
    <property type="entry name" value="BETA-DEFENSIN 123-RELATED"/>
    <property type="match status" value="1"/>
</dbReference>
<dbReference type="PANTHER" id="PTHR15001:SF7">
    <property type="entry name" value="DEFENSIN BETA 118"/>
    <property type="match status" value="1"/>
</dbReference>
<dbReference type="Pfam" id="PF13841">
    <property type="entry name" value="Defensin_beta_2"/>
    <property type="match status" value="1"/>
</dbReference>
<evidence type="ECO:0000250" key="1">
    <source>
        <dbReference type="UniProtKB" id="Q91V82"/>
    </source>
</evidence>
<evidence type="ECO:0000250" key="2">
    <source>
        <dbReference type="UniProtKB" id="Q96PH6"/>
    </source>
</evidence>
<evidence type="ECO:0000255" key="3"/>
<evidence type="ECO:0000256" key="4">
    <source>
        <dbReference type="SAM" id="MobiDB-lite"/>
    </source>
</evidence>
<evidence type="ECO:0000305" key="5"/>
<keyword id="KW-0044">Antibiotic</keyword>
<keyword id="KW-0929">Antimicrobial</keyword>
<keyword id="KW-0165">Cleavage on pair of basic residues</keyword>
<keyword id="KW-0211">Defensin</keyword>
<keyword id="KW-1015">Disulfide bond</keyword>
<keyword id="KW-0964">Secreted</keyword>
<keyword id="KW-0732">Signal</keyword>
<protein>
    <recommendedName>
        <fullName evidence="2">Defensin beta 118</fullName>
    </recommendedName>
    <alternativeName>
        <fullName evidence="5">Beta-defensin 118</fullName>
    </alternativeName>
</protein>
<proteinExistence type="inferred from homology"/>
<feature type="signal peptide" evidence="3">
    <location>
        <begin position="1"/>
        <end position="19"/>
    </location>
</feature>
<feature type="peptide" id="PRO_0000289828" description="Defensin beta 118">
    <location>
        <begin position="20"/>
        <end position="62"/>
    </location>
</feature>
<feature type="propeptide" id="PRO_0000289829" evidence="3">
    <location>
        <begin position="65"/>
        <end position="123"/>
    </location>
</feature>
<feature type="region of interest" description="Disordered" evidence="4">
    <location>
        <begin position="100"/>
        <end position="123"/>
    </location>
</feature>
<feature type="compositionally biased region" description="Polar residues" evidence="4">
    <location>
        <begin position="109"/>
        <end position="123"/>
    </location>
</feature>
<feature type="disulfide bond" evidence="1">
    <location>
        <begin position="27"/>
        <end position="54"/>
    </location>
</feature>
<feature type="disulfide bond" evidence="1">
    <location>
        <begin position="34"/>
        <end position="48"/>
    </location>
</feature>
<feature type="disulfide bond" evidence="1">
    <location>
        <begin position="38"/>
        <end position="55"/>
    </location>
</feature>
<gene>
    <name type="primary">DEFB118</name>
</gene>
<reference key="1">
    <citation type="submission" date="2006-11" db="EMBL/GenBank/DDBJ databases">
        <title>Evolution and sequence variation of human beta-defensin genes.</title>
        <authorList>
            <person name="Hollox E.J."/>
            <person name="Armour J.A.L."/>
        </authorList>
    </citation>
    <scope>NUCLEOTIDE SEQUENCE [GENOMIC DNA]</scope>
</reference>
<sequence>MKLLLLALPMLVLLPQVIPAYSGEKKCWNRSGHCRKQCKDGEAVKDTCKNLRACCVPSNEDHRRVPTTSPTPLSDSTRGVIDDILTVRFTTDYFEVSSKKNMVEESEVGQGTQTSLPNVHHSS</sequence>
<accession>A4H221</accession>